<reference key="1">
    <citation type="journal article" date="2004" name="Nature">
        <title>Genome evolution in yeasts.</title>
        <authorList>
            <person name="Dujon B."/>
            <person name="Sherman D."/>
            <person name="Fischer G."/>
            <person name="Durrens P."/>
            <person name="Casaregola S."/>
            <person name="Lafontaine I."/>
            <person name="de Montigny J."/>
            <person name="Marck C."/>
            <person name="Neuveglise C."/>
            <person name="Talla E."/>
            <person name="Goffard N."/>
            <person name="Frangeul L."/>
            <person name="Aigle M."/>
            <person name="Anthouard V."/>
            <person name="Babour A."/>
            <person name="Barbe V."/>
            <person name="Barnay S."/>
            <person name="Blanchin S."/>
            <person name="Beckerich J.-M."/>
            <person name="Beyne E."/>
            <person name="Bleykasten C."/>
            <person name="Boisrame A."/>
            <person name="Boyer J."/>
            <person name="Cattolico L."/>
            <person name="Confanioleri F."/>
            <person name="de Daruvar A."/>
            <person name="Despons L."/>
            <person name="Fabre E."/>
            <person name="Fairhead C."/>
            <person name="Ferry-Dumazet H."/>
            <person name="Groppi A."/>
            <person name="Hantraye F."/>
            <person name="Hennequin C."/>
            <person name="Jauniaux N."/>
            <person name="Joyet P."/>
            <person name="Kachouri R."/>
            <person name="Kerrest A."/>
            <person name="Koszul R."/>
            <person name="Lemaire M."/>
            <person name="Lesur I."/>
            <person name="Ma L."/>
            <person name="Muller H."/>
            <person name="Nicaud J.-M."/>
            <person name="Nikolski M."/>
            <person name="Oztas S."/>
            <person name="Ozier-Kalogeropoulos O."/>
            <person name="Pellenz S."/>
            <person name="Potier S."/>
            <person name="Richard G.-F."/>
            <person name="Straub M.-L."/>
            <person name="Suleau A."/>
            <person name="Swennen D."/>
            <person name="Tekaia F."/>
            <person name="Wesolowski-Louvel M."/>
            <person name="Westhof E."/>
            <person name="Wirth B."/>
            <person name="Zeniou-Meyer M."/>
            <person name="Zivanovic Y."/>
            <person name="Bolotin-Fukuhara M."/>
            <person name="Thierry A."/>
            <person name="Bouchier C."/>
            <person name="Caudron B."/>
            <person name="Scarpelli C."/>
            <person name="Gaillardin C."/>
            <person name="Weissenbach J."/>
            <person name="Wincker P."/>
            <person name="Souciet J.-L."/>
        </authorList>
    </citation>
    <scope>NUCLEOTIDE SEQUENCE [LARGE SCALE GENOMIC DNA]</scope>
    <source>
        <strain>ATCC 8585 / CBS 2359 / DSM 70799 / NBRC 1267 / NRRL Y-1140 / WM37</strain>
    </source>
</reference>
<accession>Q6CQN7</accession>
<dbReference type="EC" id="3.6.1.23" evidence="1"/>
<dbReference type="EMBL" id="CR382124">
    <property type="protein sequence ID" value="CAH00848.1"/>
    <property type="molecule type" value="Genomic_DNA"/>
</dbReference>
<dbReference type="RefSeq" id="XP_453752.1">
    <property type="nucleotide sequence ID" value="XM_453752.1"/>
</dbReference>
<dbReference type="SMR" id="Q6CQN7"/>
<dbReference type="FunCoup" id="Q6CQN7">
    <property type="interactions" value="1209"/>
</dbReference>
<dbReference type="STRING" id="284590.Q6CQN7"/>
<dbReference type="PaxDb" id="284590-Q6CQN7"/>
<dbReference type="KEGG" id="kla:KLLA0_D15697g"/>
<dbReference type="eggNOG" id="KOG3370">
    <property type="taxonomic scope" value="Eukaryota"/>
</dbReference>
<dbReference type="HOGENOM" id="CLU_068508_2_1_1"/>
<dbReference type="InParanoid" id="Q6CQN7"/>
<dbReference type="OMA" id="GREFHTQ"/>
<dbReference type="UniPathway" id="UPA00610">
    <property type="reaction ID" value="UER00666"/>
</dbReference>
<dbReference type="Proteomes" id="UP000000598">
    <property type="component" value="Chromosome D"/>
</dbReference>
<dbReference type="GO" id="GO:0004170">
    <property type="term" value="F:dUTP diphosphatase activity"/>
    <property type="evidence" value="ECO:0007669"/>
    <property type="project" value="UniProtKB-EC"/>
</dbReference>
<dbReference type="GO" id="GO:0000287">
    <property type="term" value="F:magnesium ion binding"/>
    <property type="evidence" value="ECO:0007669"/>
    <property type="project" value="InterPro"/>
</dbReference>
<dbReference type="GO" id="GO:0006226">
    <property type="term" value="P:dUMP biosynthetic process"/>
    <property type="evidence" value="ECO:0007669"/>
    <property type="project" value="UniProtKB-UniPathway"/>
</dbReference>
<dbReference type="GO" id="GO:0046081">
    <property type="term" value="P:dUTP catabolic process"/>
    <property type="evidence" value="ECO:0007669"/>
    <property type="project" value="InterPro"/>
</dbReference>
<dbReference type="CDD" id="cd07557">
    <property type="entry name" value="trimeric_dUTPase"/>
    <property type="match status" value="1"/>
</dbReference>
<dbReference type="FunFam" id="2.70.40.10:FF:000007">
    <property type="entry name" value="dUTP pyrophosphatase"/>
    <property type="match status" value="1"/>
</dbReference>
<dbReference type="Gene3D" id="2.70.40.10">
    <property type="match status" value="1"/>
</dbReference>
<dbReference type="InterPro" id="IPR008181">
    <property type="entry name" value="dUTPase"/>
</dbReference>
<dbReference type="InterPro" id="IPR029054">
    <property type="entry name" value="dUTPase-like"/>
</dbReference>
<dbReference type="InterPro" id="IPR036157">
    <property type="entry name" value="dUTPase-like_sf"/>
</dbReference>
<dbReference type="InterPro" id="IPR033704">
    <property type="entry name" value="dUTPase_trimeric"/>
</dbReference>
<dbReference type="NCBIfam" id="TIGR00576">
    <property type="entry name" value="dut"/>
    <property type="match status" value="1"/>
</dbReference>
<dbReference type="NCBIfam" id="NF001862">
    <property type="entry name" value="PRK00601.1"/>
    <property type="match status" value="1"/>
</dbReference>
<dbReference type="PANTHER" id="PTHR11241">
    <property type="entry name" value="DEOXYURIDINE 5'-TRIPHOSPHATE NUCLEOTIDOHYDROLASE"/>
    <property type="match status" value="1"/>
</dbReference>
<dbReference type="PANTHER" id="PTHR11241:SF0">
    <property type="entry name" value="DEOXYURIDINE 5'-TRIPHOSPHATE NUCLEOTIDOHYDROLASE"/>
    <property type="match status" value="1"/>
</dbReference>
<dbReference type="Pfam" id="PF00692">
    <property type="entry name" value="dUTPase"/>
    <property type="match status" value="1"/>
</dbReference>
<dbReference type="SUPFAM" id="SSF51283">
    <property type="entry name" value="dUTPase-like"/>
    <property type="match status" value="1"/>
</dbReference>
<proteinExistence type="inferred from homology"/>
<gene>
    <name type="primary">DUT1</name>
    <name type="ordered locus">KLLA0D15697g</name>
</gene>
<comment type="function">
    <text evidence="1">Involved in nucleotide metabolism via production of dUMP, the immediate precursor of thymidine nucleotides, and decreases the intracellular concentration of dUTP so that uracil cannot be incorporated into DNA.</text>
</comment>
<comment type="catalytic activity">
    <reaction evidence="1">
        <text>dUTP + H2O = dUMP + diphosphate + H(+)</text>
        <dbReference type="Rhea" id="RHEA:10248"/>
        <dbReference type="ChEBI" id="CHEBI:15377"/>
        <dbReference type="ChEBI" id="CHEBI:15378"/>
        <dbReference type="ChEBI" id="CHEBI:33019"/>
        <dbReference type="ChEBI" id="CHEBI:61555"/>
        <dbReference type="ChEBI" id="CHEBI:246422"/>
        <dbReference type="EC" id="3.6.1.23"/>
    </reaction>
    <physiologicalReaction direction="left-to-right" evidence="1">
        <dbReference type="Rhea" id="RHEA:10249"/>
    </physiologicalReaction>
</comment>
<comment type="cofactor">
    <cofactor evidence="1">
        <name>Mg(2+)</name>
        <dbReference type="ChEBI" id="CHEBI:18420"/>
    </cofactor>
</comment>
<comment type="pathway">
    <text>Pyrimidine metabolism; dUMP biosynthesis; dUMP from dCTP (dUTP route): step 2/2.</text>
</comment>
<comment type="subunit">
    <text evidence="1">Homotrimer.</text>
</comment>
<comment type="similarity">
    <text evidence="2">Belongs to the dUTPase family.</text>
</comment>
<feature type="chain" id="PRO_0000182933" description="Deoxyuridine 5'-triphosphate nucleotidohydrolase">
    <location>
        <begin position="1"/>
        <end position="148"/>
    </location>
</feature>
<feature type="binding site" evidence="1">
    <location>
        <position position="69"/>
    </location>
    <ligand>
        <name>dUMP</name>
        <dbReference type="ChEBI" id="CHEBI:246422"/>
    </ligand>
</feature>
<feature type="binding site" evidence="1">
    <location>
        <position position="82"/>
    </location>
    <ligand>
        <name>dUMP</name>
        <dbReference type="ChEBI" id="CHEBI:246422"/>
    </ligand>
</feature>
<feature type="binding site" evidence="1">
    <location>
        <position position="85"/>
    </location>
    <ligand>
        <name>dUMP</name>
        <dbReference type="ChEBI" id="CHEBI:246422"/>
    </ligand>
</feature>
<feature type="binding site" evidence="1">
    <location>
        <position position="88"/>
    </location>
    <ligand>
        <name>dUMP</name>
        <dbReference type="ChEBI" id="CHEBI:246422"/>
    </ligand>
</feature>
<feature type="binding site" evidence="1">
    <location>
        <position position="137"/>
    </location>
    <ligand>
        <name>dUMP</name>
        <dbReference type="ChEBI" id="CHEBI:246422"/>
    </ligand>
</feature>
<feature type="binding site" evidence="1">
    <location>
        <position position="142"/>
    </location>
    <ligand>
        <name>dUMP</name>
        <dbReference type="ChEBI" id="CHEBI:246422"/>
    </ligand>
</feature>
<feature type="binding site" evidence="1">
    <location>
        <position position="143"/>
    </location>
    <ligand>
        <name>dUMP</name>
        <dbReference type="ChEBI" id="CHEBI:246422"/>
    </ligand>
</feature>
<sequence>MTESLSNSLKVQLRSADAKVPTKGSTTAAGYDIYASQPGVIPARGQGIAKTDISFTVPVGTYGRIAPRSGLAVKHGIQTGAGVVDRDYTGEVGIVLFNHSDKDFQINKGDRVAQLILEKIVEDAEIVVVESLEETQRGAGGFGSTGKN</sequence>
<evidence type="ECO:0000250" key="1">
    <source>
        <dbReference type="UniProtKB" id="P33317"/>
    </source>
</evidence>
<evidence type="ECO:0000305" key="2"/>
<protein>
    <recommendedName>
        <fullName evidence="1">Deoxyuridine 5'-triphosphate nucleotidohydrolase</fullName>
        <shortName evidence="1">dUTPase</shortName>
        <ecNumber evidence="1">3.6.1.23</ecNumber>
    </recommendedName>
    <alternativeName>
        <fullName evidence="1">dUTP pyrophosphatase</fullName>
    </alternativeName>
</protein>
<keyword id="KW-0378">Hydrolase</keyword>
<keyword id="KW-0460">Magnesium</keyword>
<keyword id="KW-0479">Metal-binding</keyword>
<keyword id="KW-0546">Nucleotide metabolism</keyword>
<keyword id="KW-1185">Reference proteome</keyword>
<name>DUT_KLULA</name>
<organism>
    <name type="scientific">Kluyveromyces lactis (strain ATCC 8585 / CBS 2359 / DSM 70799 / NBRC 1267 / NRRL Y-1140 / WM37)</name>
    <name type="common">Yeast</name>
    <name type="synonym">Candida sphaerica</name>
    <dbReference type="NCBI Taxonomy" id="284590"/>
    <lineage>
        <taxon>Eukaryota</taxon>
        <taxon>Fungi</taxon>
        <taxon>Dikarya</taxon>
        <taxon>Ascomycota</taxon>
        <taxon>Saccharomycotina</taxon>
        <taxon>Saccharomycetes</taxon>
        <taxon>Saccharomycetales</taxon>
        <taxon>Saccharomycetaceae</taxon>
        <taxon>Kluyveromyces</taxon>
    </lineage>
</organism>